<dbReference type="EMBL" id="AAFI02000200">
    <property type="protein sequence ID" value="EAL60814.1"/>
    <property type="molecule type" value="Genomic_DNA"/>
</dbReference>
<dbReference type="RefSeq" id="XP_629236.1">
    <property type="nucleotide sequence ID" value="XM_629234.1"/>
</dbReference>
<dbReference type="SMR" id="Q54C30"/>
<dbReference type="FunCoup" id="Q54C30">
    <property type="interactions" value="68"/>
</dbReference>
<dbReference type="STRING" id="44689.Q54C30"/>
<dbReference type="PaxDb" id="44689-DDB0266411"/>
<dbReference type="EnsemblProtists" id="EAL60814">
    <property type="protein sequence ID" value="EAL60814"/>
    <property type="gene ID" value="DDB_G0293230"/>
</dbReference>
<dbReference type="GeneID" id="8629118"/>
<dbReference type="KEGG" id="ddi:DDB_G0293230"/>
<dbReference type="dictyBase" id="DDB_G0293230">
    <property type="gene designation" value="cdc26"/>
</dbReference>
<dbReference type="VEuPathDB" id="AmoebaDB:DDB_G0293230"/>
<dbReference type="eggNOG" id="ENOG502RINK">
    <property type="taxonomic scope" value="Eukaryota"/>
</dbReference>
<dbReference type="HOGENOM" id="CLU_190086_1_0_1"/>
<dbReference type="InParanoid" id="Q54C30"/>
<dbReference type="OMA" id="MINRKPT"/>
<dbReference type="Reactome" id="R-DDI-141430">
    <property type="pathway name" value="Inactivation of APC/C via direct inhibition of the APC/C complex"/>
</dbReference>
<dbReference type="Reactome" id="R-DDI-174048">
    <property type="pathway name" value="APC/C:Cdc20 mediated degradation of Cyclin B"/>
</dbReference>
<dbReference type="Reactome" id="R-DDI-174084">
    <property type="pathway name" value="Autodegradation of Cdh1 by Cdh1:APC/C"/>
</dbReference>
<dbReference type="Reactome" id="R-DDI-174154">
    <property type="pathway name" value="APC/C:Cdc20 mediated degradation of Securin"/>
</dbReference>
<dbReference type="Reactome" id="R-DDI-174178">
    <property type="pathway name" value="APC/C:Cdh1 mediated degradation of Cdc20 and other APC/C:Cdh1 targeted proteins in late mitosis/early G1"/>
</dbReference>
<dbReference type="Reactome" id="R-DDI-174184">
    <property type="pathway name" value="Cdc20:Phospho-APC/C mediated degradation of Cyclin A"/>
</dbReference>
<dbReference type="Reactome" id="R-DDI-176407">
    <property type="pathway name" value="Conversion from APC/C:Cdc20 to APC/C:Cdh1 in late anaphase"/>
</dbReference>
<dbReference type="Reactome" id="R-DDI-176408">
    <property type="pathway name" value="Regulation of APC/C activators between G1/S and early anaphase"/>
</dbReference>
<dbReference type="Reactome" id="R-DDI-176409">
    <property type="pathway name" value="APC/C:Cdc20 mediated degradation of mitotic proteins"/>
</dbReference>
<dbReference type="Reactome" id="R-DDI-176412">
    <property type="pathway name" value="Phosphorylation of the APC/C"/>
</dbReference>
<dbReference type="Reactome" id="R-DDI-179409">
    <property type="pathway name" value="APC-Cdc20 mediated degradation of Nek2A"/>
</dbReference>
<dbReference type="Reactome" id="R-DDI-2467813">
    <property type="pathway name" value="Separation of Sister Chromatids"/>
</dbReference>
<dbReference type="Reactome" id="R-DDI-2559582">
    <property type="pathway name" value="Senescence-Associated Secretory Phenotype (SASP)"/>
</dbReference>
<dbReference type="Reactome" id="R-DDI-69017">
    <property type="pathway name" value="CDK-mediated phosphorylation and removal of Cdc6"/>
</dbReference>
<dbReference type="Reactome" id="R-DDI-983168">
    <property type="pathway name" value="Antigen processing: Ubiquitination &amp; Proteasome degradation"/>
</dbReference>
<dbReference type="UniPathway" id="UPA00143"/>
<dbReference type="PRO" id="PR:Q54C30"/>
<dbReference type="Proteomes" id="UP000002195">
    <property type="component" value="Chromosome 6"/>
</dbReference>
<dbReference type="GO" id="GO:0005680">
    <property type="term" value="C:anaphase-promoting complex"/>
    <property type="evidence" value="ECO:0000318"/>
    <property type="project" value="GO_Central"/>
</dbReference>
<dbReference type="GO" id="GO:0031145">
    <property type="term" value="P:anaphase-promoting complex-dependent catabolic process"/>
    <property type="evidence" value="ECO:0007669"/>
    <property type="project" value="InterPro"/>
</dbReference>
<dbReference type="GO" id="GO:0051301">
    <property type="term" value="P:cell division"/>
    <property type="evidence" value="ECO:0007669"/>
    <property type="project" value="UniProtKB-KW"/>
</dbReference>
<dbReference type="GO" id="GO:0070979">
    <property type="term" value="P:protein K11-linked ubiquitination"/>
    <property type="evidence" value="ECO:0000318"/>
    <property type="project" value="GO_Central"/>
</dbReference>
<dbReference type="GO" id="GO:0007346">
    <property type="term" value="P:regulation of mitotic cell cycle"/>
    <property type="evidence" value="ECO:0000318"/>
    <property type="project" value="GO_Central"/>
</dbReference>
<dbReference type="InterPro" id="IPR018860">
    <property type="entry name" value="APC_suCDC26"/>
</dbReference>
<dbReference type="PANTHER" id="PTHR28579">
    <property type="entry name" value="ANAPHASE-PROMOTING COMPLEX SUBUNIT CDC26"/>
    <property type="match status" value="1"/>
</dbReference>
<dbReference type="PANTHER" id="PTHR28579:SF1">
    <property type="entry name" value="ANAPHASE-PROMOTING COMPLEX SUBUNIT CDC26"/>
    <property type="match status" value="1"/>
</dbReference>
<dbReference type="Pfam" id="PF10471">
    <property type="entry name" value="ANAPC_CDC26"/>
    <property type="match status" value="1"/>
</dbReference>
<feature type="chain" id="PRO_0000328557" description="Anaphase-promoting complex subunit cdc26">
    <location>
        <begin position="1"/>
        <end position="69"/>
    </location>
</feature>
<feature type="region of interest" description="Disordered" evidence="3">
    <location>
        <begin position="23"/>
        <end position="69"/>
    </location>
</feature>
<feature type="coiled-coil region" evidence="2">
    <location>
        <begin position="8"/>
        <end position="38"/>
    </location>
</feature>
<feature type="compositionally biased region" description="Polar residues" evidence="3">
    <location>
        <begin position="39"/>
        <end position="63"/>
    </location>
</feature>
<comment type="function">
    <text evidence="1">Component of the anaphase promoting complex/cyclosome (APC/C), a cell cycle-regulated E3 ubiquitin-protein ligase complex that controls progression through mitosis and the G1 phase of the cell cycle.</text>
</comment>
<comment type="pathway">
    <text>Protein modification; protein ubiquitination.</text>
</comment>
<comment type="subunit">
    <text evidence="1">The APC/C is composed of at least 13 subunits that stay tightly associated throughout the cell cycle: anapc1, anapc2, anapc3, anapc4, anapc5, anapc6, anapc7, anapc8, anapc10, anapc11, cdc20, cdc26 and cdh1.</text>
</comment>
<comment type="subcellular location">
    <subcellularLocation>
        <location evidence="1">Nucleus</location>
    </subcellularLocation>
</comment>
<comment type="similarity">
    <text evidence="4">Belongs to the CDC26 family.</text>
</comment>
<organism>
    <name type="scientific">Dictyostelium discoideum</name>
    <name type="common">Social amoeba</name>
    <dbReference type="NCBI Taxonomy" id="44689"/>
    <lineage>
        <taxon>Eukaryota</taxon>
        <taxon>Amoebozoa</taxon>
        <taxon>Evosea</taxon>
        <taxon>Eumycetozoa</taxon>
        <taxon>Dictyostelia</taxon>
        <taxon>Dictyosteliales</taxon>
        <taxon>Dictyosteliaceae</taxon>
        <taxon>Dictyostelium</taxon>
    </lineage>
</organism>
<name>CDC26_DICDI</name>
<gene>
    <name type="primary">cdc26</name>
    <name type="ORF">DDB_G0293230</name>
</gene>
<keyword id="KW-0131">Cell cycle</keyword>
<keyword id="KW-0132">Cell division</keyword>
<keyword id="KW-0175">Coiled coil</keyword>
<keyword id="KW-0498">Mitosis</keyword>
<keyword id="KW-0539">Nucleus</keyword>
<keyword id="KW-1185">Reference proteome</keyword>
<keyword id="KW-0833">Ubl conjugation pathway</keyword>
<protein>
    <recommendedName>
        <fullName>Anaphase-promoting complex subunit cdc26</fullName>
    </recommendedName>
    <alternativeName>
        <fullName>Cell division cycle protein 26 homolog</fullName>
    </alternativeName>
</protein>
<proteinExistence type="inferred from homology"/>
<reference key="1">
    <citation type="journal article" date="2005" name="Nature">
        <title>The genome of the social amoeba Dictyostelium discoideum.</title>
        <authorList>
            <person name="Eichinger L."/>
            <person name="Pachebat J.A."/>
            <person name="Gloeckner G."/>
            <person name="Rajandream M.A."/>
            <person name="Sucgang R."/>
            <person name="Berriman M."/>
            <person name="Song J."/>
            <person name="Olsen R."/>
            <person name="Szafranski K."/>
            <person name="Xu Q."/>
            <person name="Tunggal B."/>
            <person name="Kummerfeld S."/>
            <person name="Madera M."/>
            <person name="Konfortov B.A."/>
            <person name="Rivero F."/>
            <person name="Bankier A.T."/>
            <person name="Lehmann R."/>
            <person name="Hamlin N."/>
            <person name="Davies R."/>
            <person name="Gaudet P."/>
            <person name="Fey P."/>
            <person name="Pilcher K."/>
            <person name="Chen G."/>
            <person name="Saunders D."/>
            <person name="Sodergren E.J."/>
            <person name="Davis P."/>
            <person name="Kerhornou A."/>
            <person name="Nie X."/>
            <person name="Hall N."/>
            <person name="Anjard C."/>
            <person name="Hemphill L."/>
            <person name="Bason N."/>
            <person name="Farbrother P."/>
            <person name="Desany B."/>
            <person name="Just E."/>
            <person name="Morio T."/>
            <person name="Rost R."/>
            <person name="Churcher C.M."/>
            <person name="Cooper J."/>
            <person name="Haydock S."/>
            <person name="van Driessche N."/>
            <person name="Cronin A."/>
            <person name="Goodhead I."/>
            <person name="Muzny D.M."/>
            <person name="Mourier T."/>
            <person name="Pain A."/>
            <person name="Lu M."/>
            <person name="Harper D."/>
            <person name="Lindsay R."/>
            <person name="Hauser H."/>
            <person name="James K.D."/>
            <person name="Quiles M."/>
            <person name="Madan Babu M."/>
            <person name="Saito T."/>
            <person name="Buchrieser C."/>
            <person name="Wardroper A."/>
            <person name="Felder M."/>
            <person name="Thangavelu M."/>
            <person name="Johnson D."/>
            <person name="Knights A."/>
            <person name="Loulseged H."/>
            <person name="Mungall K.L."/>
            <person name="Oliver K."/>
            <person name="Price C."/>
            <person name="Quail M.A."/>
            <person name="Urushihara H."/>
            <person name="Hernandez J."/>
            <person name="Rabbinowitsch E."/>
            <person name="Steffen D."/>
            <person name="Sanders M."/>
            <person name="Ma J."/>
            <person name="Kohara Y."/>
            <person name="Sharp S."/>
            <person name="Simmonds M.N."/>
            <person name="Spiegler S."/>
            <person name="Tivey A."/>
            <person name="Sugano S."/>
            <person name="White B."/>
            <person name="Walker D."/>
            <person name="Woodward J.R."/>
            <person name="Winckler T."/>
            <person name="Tanaka Y."/>
            <person name="Shaulsky G."/>
            <person name="Schleicher M."/>
            <person name="Weinstock G.M."/>
            <person name="Rosenthal A."/>
            <person name="Cox E.C."/>
            <person name="Chisholm R.L."/>
            <person name="Gibbs R.A."/>
            <person name="Loomis W.F."/>
            <person name="Platzer M."/>
            <person name="Kay R.R."/>
            <person name="Williams J.G."/>
            <person name="Dear P.H."/>
            <person name="Noegel A.A."/>
            <person name="Barrell B.G."/>
            <person name="Kuspa A."/>
        </authorList>
    </citation>
    <scope>NUCLEOTIDE SEQUENCE [LARGE SCALE GENOMIC DNA]</scope>
    <source>
        <strain>AX4</strain>
    </source>
</reference>
<evidence type="ECO:0000250" key="1"/>
<evidence type="ECO:0000255" key="2"/>
<evidence type="ECO:0000256" key="3">
    <source>
        <dbReference type="SAM" id="MobiDB-lite"/>
    </source>
</evidence>
<evidence type="ECO:0000305" key="4"/>
<accession>Q54C30</accession>
<sequence>MINRKPTRIELNMEDIEEYEQLKKEQTNSYKQQQQQQQPTTISTPKQYPLLNTTQPPKKTTAQIIGYDQ</sequence>